<sequence>MIKEDNIEMHGIVLDTLPNTMFRVQLENGHKITAHISGKIRKNYIRILTGDKVTVELTPYDLSKGRIIFRSR</sequence>
<evidence type="ECO:0000255" key="1">
    <source>
        <dbReference type="HAMAP-Rule" id="MF_00075"/>
    </source>
</evidence>
<gene>
    <name evidence="1" type="primary">infA</name>
    <name type="ordered locus">Bfl388</name>
</gene>
<proteinExistence type="inferred from homology"/>
<accession>Q7VR35</accession>
<name>IF1_BLOFL</name>
<comment type="function">
    <text evidence="1">One of the essential components for the initiation of protein synthesis. Stabilizes the binding of IF-2 and IF-3 on the 30S subunit to which N-formylmethionyl-tRNA(fMet) subsequently binds. Helps modulate mRNA selection, yielding the 30S pre-initiation complex (PIC). Upon addition of the 50S ribosomal subunit IF-1, IF-2 and IF-3 are released leaving the mature 70S translation initiation complex.</text>
</comment>
<comment type="subunit">
    <text evidence="1">Component of the 30S ribosomal translation pre-initiation complex which assembles on the 30S ribosome in the order IF-2 and IF-3, IF-1 and N-formylmethionyl-tRNA(fMet); mRNA recruitment can occur at any time during PIC assembly.</text>
</comment>
<comment type="subcellular location">
    <subcellularLocation>
        <location evidence="1">Cytoplasm</location>
    </subcellularLocation>
</comment>
<comment type="similarity">
    <text evidence="1">Belongs to the IF-1 family.</text>
</comment>
<feature type="chain" id="PRO_0000095765" description="Translation initiation factor IF-1">
    <location>
        <begin position="1"/>
        <end position="72"/>
    </location>
</feature>
<feature type="domain" description="S1-like" evidence="1">
    <location>
        <begin position="1"/>
        <end position="72"/>
    </location>
</feature>
<dbReference type="EMBL" id="BX248583">
    <property type="protein sequence ID" value="CAD83454.1"/>
    <property type="molecule type" value="Genomic_DNA"/>
</dbReference>
<dbReference type="SMR" id="Q7VR35"/>
<dbReference type="STRING" id="203907.Bfl388"/>
<dbReference type="KEGG" id="bfl:Bfl388"/>
<dbReference type="eggNOG" id="COG0361">
    <property type="taxonomic scope" value="Bacteria"/>
</dbReference>
<dbReference type="HOGENOM" id="CLU_151267_1_0_6"/>
<dbReference type="OrthoDB" id="9803250at2"/>
<dbReference type="Proteomes" id="UP000002192">
    <property type="component" value="Chromosome"/>
</dbReference>
<dbReference type="GO" id="GO:0005829">
    <property type="term" value="C:cytosol"/>
    <property type="evidence" value="ECO:0007669"/>
    <property type="project" value="TreeGrafter"/>
</dbReference>
<dbReference type="GO" id="GO:0043022">
    <property type="term" value="F:ribosome binding"/>
    <property type="evidence" value="ECO:0007669"/>
    <property type="project" value="UniProtKB-UniRule"/>
</dbReference>
<dbReference type="GO" id="GO:0019843">
    <property type="term" value="F:rRNA binding"/>
    <property type="evidence" value="ECO:0007669"/>
    <property type="project" value="UniProtKB-UniRule"/>
</dbReference>
<dbReference type="GO" id="GO:0003743">
    <property type="term" value="F:translation initiation factor activity"/>
    <property type="evidence" value="ECO:0007669"/>
    <property type="project" value="UniProtKB-UniRule"/>
</dbReference>
<dbReference type="CDD" id="cd04451">
    <property type="entry name" value="S1_IF1"/>
    <property type="match status" value="1"/>
</dbReference>
<dbReference type="FunFam" id="2.40.50.140:FF:000002">
    <property type="entry name" value="Translation initiation factor IF-1"/>
    <property type="match status" value="1"/>
</dbReference>
<dbReference type="Gene3D" id="2.40.50.140">
    <property type="entry name" value="Nucleic acid-binding proteins"/>
    <property type="match status" value="1"/>
</dbReference>
<dbReference type="HAMAP" id="MF_00075">
    <property type="entry name" value="IF_1"/>
    <property type="match status" value="1"/>
</dbReference>
<dbReference type="InterPro" id="IPR012340">
    <property type="entry name" value="NA-bd_OB-fold"/>
</dbReference>
<dbReference type="InterPro" id="IPR006196">
    <property type="entry name" value="RNA-binding_domain_S1_IF1"/>
</dbReference>
<dbReference type="InterPro" id="IPR003029">
    <property type="entry name" value="S1_domain"/>
</dbReference>
<dbReference type="InterPro" id="IPR004368">
    <property type="entry name" value="TIF_IF1"/>
</dbReference>
<dbReference type="NCBIfam" id="TIGR00008">
    <property type="entry name" value="infA"/>
    <property type="match status" value="1"/>
</dbReference>
<dbReference type="PANTHER" id="PTHR33370">
    <property type="entry name" value="TRANSLATION INITIATION FACTOR IF-1, CHLOROPLASTIC"/>
    <property type="match status" value="1"/>
</dbReference>
<dbReference type="PANTHER" id="PTHR33370:SF1">
    <property type="entry name" value="TRANSLATION INITIATION FACTOR IF-1, CHLOROPLASTIC"/>
    <property type="match status" value="1"/>
</dbReference>
<dbReference type="Pfam" id="PF01176">
    <property type="entry name" value="eIF-1a"/>
    <property type="match status" value="1"/>
</dbReference>
<dbReference type="SMART" id="SM00316">
    <property type="entry name" value="S1"/>
    <property type="match status" value="1"/>
</dbReference>
<dbReference type="SUPFAM" id="SSF50249">
    <property type="entry name" value="Nucleic acid-binding proteins"/>
    <property type="match status" value="1"/>
</dbReference>
<dbReference type="PROSITE" id="PS50832">
    <property type="entry name" value="S1_IF1_TYPE"/>
    <property type="match status" value="1"/>
</dbReference>
<reference key="1">
    <citation type="journal article" date="2003" name="Proc. Natl. Acad. Sci. U.S.A.">
        <title>The genome sequence of Blochmannia floridanus: comparative analysis of reduced genomes.</title>
        <authorList>
            <person name="Gil R."/>
            <person name="Silva F.J."/>
            <person name="Zientz E."/>
            <person name="Delmotte F."/>
            <person name="Gonzalez-Candelas F."/>
            <person name="Latorre A."/>
            <person name="Rausell C."/>
            <person name="Kamerbeek J."/>
            <person name="Gadau J."/>
            <person name="Hoelldobler B."/>
            <person name="van Ham R.C.H.J."/>
            <person name="Gross R."/>
            <person name="Moya A."/>
        </authorList>
    </citation>
    <scope>NUCLEOTIDE SEQUENCE [LARGE SCALE GENOMIC DNA]</scope>
</reference>
<keyword id="KW-0963">Cytoplasm</keyword>
<keyword id="KW-0396">Initiation factor</keyword>
<keyword id="KW-0648">Protein biosynthesis</keyword>
<keyword id="KW-1185">Reference proteome</keyword>
<keyword id="KW-0694">RNA-binding</keyword>
<keyword id="KW-0699">rRNA-binding</keyword>
<protein>
    <recommendedName>
        <fullName evidence="1">Translation initiation factor IF-1</fullName>
    </recommendedName>
</protein>
<organism>
    <name type="scientific">Blochmanniella floridana</name>
    <dbReference type="NCBI Taxonomy" id="203907"/>
    <lineage>
        <taxon>Bacteria</taxon>
        <taxon>Pseudomonadati</taxon>
        <taxon>Pseudomonadota</taxon>
        <taxon>Gammaproteobacteria</taxon>
        <taxon>Enterobacterales</taxon>
        <taxon>Enterobacteriaceae</taxon>
        <taxon>ant endosymbionts</taxon>
        <taxon>Candidatus Blochmanniella</taxon>
    </lineage>
</organism>